<proteinExistence type="inferred from homology"/>
<reference key="1">
    <citation type="journal article" date="2005" name="J. Bacteriol.">
        <title>Insights into genome plasticity and pathogenicity of the plant pathogenic Bacterium Xanthomonas campestris pv. vesicatoria revealed by the complete genome sequence.</title>
        <authorList>
            <person name="Thieme F."/>
            <person name="Koebnik R."/>
            <person name="Bekel T."/>
            <person name="Berger C."/>
            <person name="Boch J."/>
            <person name="Buettner D."/>
            <person name="Caldana C."/>
            <person name="Gaigalat L."/>
            <person name="Goesmann A."/>
            <person name="Kay S."/>
            <person name="Kirchner O."/>
            <person name="Lanz C."/>
            <person name="Linke B."/>
            <person name="McHardy A.C."/>
            <person name="Meyer F."/>
            <person name="Mittenhuber G."/>
            <person name="Nies D.H."/>
            <person name="Niesbach-Kloesgen U."/>
            <person name="Patschkowski T."/>
            <person name="Rueckert C."/>
            <person name="Rupp O."/>
            <person name="Schneiker S."/>
            <person name="Schuster S.C."/>
            <person name="Vorhoelter F.J."/>
            <person name="Weber E."/>
            <person name="Puehler A."/>
            <person name="Bonas U."/>
            <person name="Bartels D."/>
            <person name="Kaiser O."/>
        </authorList>
    </citation>
    <scope>NUCLEOTIDE SEQUENCE [LARGE SCALE GENOMIC DNA]</scope>
    <source>
        <strain>85-10</strain>
    </source>
</reference>
<gene>
    <name evidence="1" type="primary">upp</name>
    <name type="ordered locus">XCV2703</name>
</gene>
<accession>Q3BS29</accession>
<comment type="function">
    <text evidence="1">Catalyzes the conversion of uracil and 5-phospho-alpha-D-ribose 1-diphosphate (PRPP) to UMP and diphosphate.</text>
</comment>
<comment type="catalytic activity">
    <reaction evidence="1">
        <text>UMP + diphosphate = 5-phospho-alpha-D-ribose 1-diphosphate + uracil</text>
        <dbReference type="Rhea" id="RHEA:13017"/>
        <dbReference type="ChEBI" id="CHEBI:17568"/>
        <dbReference type="ChEBI" id="CHEBI:33019"/>
        <dbReference type="ChEBI" id="CHEBI:57865"/>
        <dbReference type="ChEBI" id="CHEBI:58017"/>
        <dbReference type="EC" id="2.4.2.9"/>
    </reaction>
</comment>
<comment type="cofactor">
    <cofactor evidence="1">
        <name>Mg(2+)</name>
        <dbReference type="ChEBI" id="CHEBI:18420"/>
    </cofactor>
    <text evidence="1">Binds 1 Mg(2+) ion per subunit. The magnesium is bound as Mg-PRPP.</text>
</comment>
<comment type="activity regulation">
    <text evidence="1">Allosterically activated by GTP.</text>
</comment>
<comment type="pathway">
    <text evidence="1">Pyrimidine metabolism; UMP biosynthesis via salvage pathway; UMP from uracil: step 1/1.</text>
</comment>
<comment type="similarity">
    <text evidence="1">Belongs to the UPRTase family.</text>
</comment>
<feature type="chain" id="PRO_1000053810" description="Uracil phosphoribosyltransferase">
    <location>
        <begin position="1"/>
        <end position="210"/>
    </location>
</feature>
<feature type="binding site" evidence="1">
    <location>
        <position position="78"/>
    </location>
    <ligand>
        <name>5-phospho-alpha-D-ribose 1-diphosphate</name>
        <dbReference type="ChEBI" id="CHEBI:58017"/>
    </ligand>
</feature>
<feature type="binding site" evidence="1">
    <location>
        <position position="103"/>
    </location>
    <ligand>
        <name>5-phospho-alpha-D-ribose 1-diphosphate</name>
        <dbReference type="ChEBI" id="CHEBI:58017"/>
    </ligand>
</feature>
<feature type="binding site" evidence="1">
    <location>
        <begin position="130"/>
        <end position="138"/>
    </location>
    <ligand>
        <name>5-phospho-alpha-D-ribose 1-diphosphate</name>
        <dbReference type="ChEBI" id="CHEBI:58017"/>
    </ligand>
</feature>
<feature type="binding site" evidence="1">
    <location>
        <position position="193"/>
    </location>
    <ligand>
        <name>uracil</name>
        <dbReference type="ChEBI" id="CHEBI:17568"/>
    </ligand>
</feature>
<feature type="binding site" evidence="1">
    <location>
        <begin position="198"/>
        <end position="200"/>
    </location>
    <ligand>
        <name>uracil</name>
        <dbReference type="ChEBI" id="CHEBI:17568"/>
    </ligand>
</feature>
<feature type="binding site" evidence="1">
    <location>
        <position position="199"/>
    </location>
    <ligand>
        <name>5-phospho-alpha-D-ribose 1-diphosphate</name>
        <dbReference type="ChEBI" id="CHEBI:58017"/>
    </ligand>
</feature>
<keyword id="KW-0021">Allosteric enzyme</keyword>
<keyword id="KW-0328">Glycosyltransferase</keyword>
<keyword id="KW-0342">GTP-binding</keyword>
<keyword id="KW-0460">Magnesium</keyword>
<keyword id="KW-0547">Nucleotide-binding</keyword>
<keyword id="KW-0808">Transferase</keyword>
<evidence type="ECO:0000255" key="1">
    <source>
        <dbReference type="HAMAP-Rule" id="MF_01218"/>
    </source>
</evidence>
<dbReference type="EC" id="2.4.2.9" evidence="1"/>
<dbReference type="EMBL" id="AM039952">
    <property type="protein sequence ID" value="CAJ24380.1"/>
    <property type="molecule type" value="Genomic_DNA"/>
</dbReference>
<dbReference type="RefSeq" id="WP_011347830.1">
    <property type="nucleotide sequence ID" value="NZ_CP017190.1"/>
</dbReference>
<dbReference type="SMR" id="Q3BS29"/>
<dbReference type="STRING" id="456327.BJD11_09345"/>
<dbReference type="GeneID" id="63991725"/>
<dbReference type="KEGG" id="xcv:XCV2703"/>
<dbReference type="eggNOG" id="COG0035">
    <property type="taxonomic scope" value="Bacteria"/>
</dbReference>
<dbReference type="HOGENOM" id="CLU_067096_2_2_6"/>
<dbReference type="UniPathway" id="UPA00574">
    <property type="reaction ID" value="UER00636"/>
</dbReference>
<dbReference type="Proteomes" id="UP000007069">
    <property type="component" value="Chromosome"/>
</dbReference>
<dbReference type="GO" id="GO:0005525">
    <property type="term" value="F:GTP binding"/>
    <property type="evidence" value="ECO:0007669"/>
    <property type="project" value="UniProtKB-KW"/>
</dbReference>
<dbReference type="GO" id="GO:0000287">
    <property type="term" value="F:magnesium ion binding"/>
    <property type="evidence" value="ECO:0007669"/>
    <property type="project" value="UniProtKB-UniRule"/>
</dbReference>
<dbReference type="GO" id="GO:0004845">
    <property type="term" value="F:uracil phosphoribosyltransferase activity"/>
    <property type="evidence" value="ECO:0007669"/>
    <property type="project" value="UniProtKB-UniRule"/>
</dbReference>
<dbReference type="GO" id="GO:0044206">
    <property type="term" value="P:UMP salvage"/>
    <property type="evidence" value="ECO:0007669"/>
    <property type="project" value="UniProtKB-UniRule"/>
</dbReference>
<dbReference type="GO" id="GO:0006223">
    <property type="term" value="P:uracil salvage"/>
    <property type="evidence" value="ECO:0007669"/>
    <property type="project" value="InterPro"/>
</dbReference>
<dbReference type="CDD" id="cd06223">
    <property type="entry name" value="PRTases_typeI"/>
    <property type="match status" value="1"/>
</dbReference>
<dbReference type="FunFam" id="3.40.50.2020:FF:000003">
    <property type="entry name" value="Uracil phosphoribosyltransferase"/>
    <property type="match status" value="1"/>
</dbReference>
<dbReference type="Gene3D" id="3.40.50.2020">
    <property type="match status" value="1"/>
</dbReference>
<dbReference type="HAMAP" id="MF_01218_B">
    <property type="entry name" value="Upp_B"/>
    <property type="match status" value="1"/>
</dbReference>
<dbReference type="InterPro" id="IPR000836">
    <property type="entry name" value="PRibTrfase_dom"/>
</dbReference>
<dbReference type="InterPro" id="IPR029057">
    <property type="entry name" value="PRTase-like"/>
</dbReference>
<dbReference type="InterPro" id="IPR034332">
    <property type="entry name" value="Upp_B"/>
</dbReference>
<dbReference type="InterPro" id="IPR050054">
    <property type="entry name" value="UPRTase/APRTase"/>
</dbReference>
<dbReference type="InterPro" id="IPR005765">
    <property type="entry name" value="Ura_phspho_trans"/>
</dbReference>
<dbReference type="NCBIfam" id="NF001097">
    <property type="entry name" value="PRK00129.1"/>
    <property type="match status" value="1"/>
</dbReference>
<dbReference type="NCBIfam" id="TIGR01091">
    <property type="entry name" value="upp"/>
    <property type="match status" value="1"/>
</dbReference>
<dbReference type="PANTHER" id="PTHR32315">
    <property type="entry name" value="ADENINE PHOSPHORIBOSYLTRANSFERASE"/>
    <property type="match status" value="1"/>
</dbReference>
<dbReference type="PANTHER" id="PTHR32315:SF4">
    <property type="entry name" value="URACIL PHOSPHORIBOSYLTRANSFERASE, CHLOROPLASTIC"/>
    <property type="match status" value="1"/>
</dbReference>
<dbReference type="Pfam" id="PF14681">
    <property type="entry name" value="UPRTase"/>
    <property type="match status" value="1"/>
</dbReference>
<dbReference type="SUPFAM" id="SSF53271">
    <property type="entry name" value="PRTase-like"/>
    <property type="match status" value="1"/>
</dbReference>
<sequence>MKIVEVRHPLVQHKIGLLRDAALSTKGFRELVTELGTLLAYEATANLDTESHTQPGWAGPVTVQRIAGAKITLVPILRAGLGMLPGVLALIPAARVSVVGLQRDEETLQPVPYFERLTGRLEERDALILDPMLATGGTLMATIDMLKRAGARRIKGIFLVAAPEGLKALEAVHPDVEVYTAAIDDHLNDKGYILPGLGDAGDRIFGTRLE</sequence>
<name>UPP_XANE5</name>
<organism>
    <name type="scientific">Xanthomonas euvesicatoria pv. vesicatoria (strain 85-10)</name>
    <name type="common">Xanthomonas campestris pv. vesicatoria</name>
    <dbReference type="NCBI Taxonomy" id="316273"/>
    <lineage>
        <taxon>Bacteria</taxon>
        <taxon>Pseudomonadati</taxon>
        <taxon>Pseudomonadota</taxon>
        <taxon>Gammaproteobacteria</taxon>
        <taxon>Lysobacterales</taxon>
        <taxon>Lysobacteraceae</taxon>
        <taxon>Xanthomonas</taxon>
    </lineage>
</organism>
<protein>
    <recommendedName>
        <fullName evidence="1">Uracil phosphoribosyltransferase</fullName>
        <ecNumber evidence="1">2.4.2.9</ecNumber>
    </recommendedName>
    <alternativeName>
        <fullName evidence="1">UMP pyrophosphorylase</fullName>
    </alternativeName>
    <alternativeName>
        <fullName evidence="1">UPRTase</fullName>
    </alternativeName>
</protein>